<gene>
    <name evidence="1" type="primary">lgt</name>
    <name type="ordered locus">GOX1135</name>
</gene>
<feature type="chain" id="PRO_0000172608" description="Phosphatidylglycerol--prolipoprotein diacylglyceryl transferase">
    <location>
        <begin position="1"/>
        <end position="273"/>
    </location>
</feature>
<feature type="transmembrane region" description="Helical" evidence="1">
    <location>
        <begin position="20"/>
        <end position="40"/>
    </location>
</feature>
<feature type="transmembrane region" description="Helical" evidence="1">
    <location>
        <begin position="59"/>
        <end position="79"/>
    </location>
</feature>
<feature type="transmembrane region" description="Helical" evidence="1">
    <location>
        <begin position="97"/>
        <end position="117"/>
    </location>
</feature>
<feature type="transmembrane region" description="Helical" evidence="1">
    <location>
        <begin position="206"/>
        <end position="226"/>
    </location>
</feature>
<feature type="transmembrane region" description="Helical" evidence="1">
    <location>
        <begin position="243"/>
        <end position="263"/>
    </location>
</feature>
<feature type="binding site" evidence="1">
    <location>
        <position position="142"/>
    </location>
    <ligand>
        <name>a 1,2-diacyl-sn-glycero-3-phospho-(1'-sn-glycerol)</name>
        <dbReference type="ChEBI" id="CHEBI:64716"/>
    </ligand>
</feature>
<comment type="function">
    <text evidence="1">Catalyzes the transfer of the diacylglyceryl group from phosphatidylglycerol to the sulfhydryl group of the N-terminal cysteine of a prolipoprotein, the first step in the formation of mature lipoproteins.</text>
</comment>
<comment type="catalytic activity">
    <reaction evidence="1">
        <text>L-cysteinyl-[prolipoprotein] + a 1,2-diacyl-sn-glycero-3-phospho-(1'-sn-glycerol) = an S-1,2-diacyl-sn-glyceryl-L-cysteinyl-[prolipoprotein] + sn-glycerol 1-phosphate + H(+)</text>
        <dbReference type="Rhea" id="RHEA:56712"/>
        <dbReference type="Rhea" id="RHEA-COMP:14679"/>
        <dbReference type="Rhea" id="RHEA-COMP:14680"/>
        <dbReference type="ChEBI" id="CHEBI:15378"/>
        <dbReference type="ChEBI" id="CHEBI:29950"/>
        <dbReference type="ChEBI" id="CHEBI:57685"/>
        <dbReference type="ChEBI" id="CHEBI:64716"/>
        <dbReference type="ChEBI" id="CHEBI:140658"/>
        <dbReference type="EC" id="2.5.1.145"/>
    </reaction>
</comment>
<comment type="pathway">
    <text evidence="1">Protein modification; lipoprotein biosynthesis (diacylglyceryl transfer).</text>
</comment>
<comment type="subcellular location">
    <subcellularLocation>
        <location evidence="1">Cell inner membrane</location>
        <topology evidence="1">Multi-pass membrane protein</topology>
    </subcellularLocation>
</comment>
<comment type="similarity">
    <text evidence="1">Belongs to the Lgt family.</text>
</comment>
<protein>
    <recommendedName>
        <fullName evidence="1">Phosphatidylglycerol--prolipoprotein diacylglyceryl transferase</fullName>
        <ecNumber evidence="1">2.5.1.145</ecNumber>
    </recommendedName>
</protein>
<name>LGT_GLUOX</name>
<proteinExistence type="inferred from homology"/>
<sequence>MSHPLIFPDFDPVAFHIGPLAVRWYALAYMVSFIIALPIARRLNRLAPEVATNEQVDDFLFYAILGVLLGGRLGYVLFYRPMDYLSHPLEIFKTWDGGMSFHGGALGVILALAYFSWKTRLSFLAFADRIVPVVPIGLGLGRCANFVNGELWGRPASPDLPWAMIFPTGGPIPRHPSELYEALTEGVLLLCVMLFAASRPQVRERFGFLSGLFLFGYACARSFCEFFRQPDANIGFLSGGTTMGQLLCIPMALAGMGLMVYAMRRPAQVSAHV</sequence>
<accession>Q5FRU4</accession>
<organism>
    <name type="scientific">Gluconobacter oxydans (strain 621H)</name>
    <name type="common">Gluconobacter suboxydans</name>
    <dbReference type="NCBI Taxonomy" id="290633"/>
    <lineage>
        <taxon>Bacteria</taxon>
        <taxon>Pseudomonadati</taxon>
        <taxon>Pseudomonadota</taxon>
        <taxon>Alphaproteobacteria</taxon>
        <taxon>Acetobacterales</taxon>
        <taxon>Acetobacteraceae</taxon>
        <taxon>Gluconobacter</taxon>
    </lineage>
</organism>
<dbReference type="EC" id="2.5.1.145" evidence="1"/>
<dbReference type="EMBL" id="CP000009">
    <property type="protein sequence ID" value="AAW60902.1"/>
    <property type="molecule type" value="Genomic_DNA"/>
</dbReference>
<dbReference type="SMR" id="Q5FRU4"/>
<dbReference type="STRING" id="290633.GOX1135"/>
<dbReference type="KEGG" id="gox:GOX1135"/>
<dbReference type="eggNOG" id="COG0682">
    <property type="taxonomic scope" value="Bacteria"/>
</dbReference>
<dbReference type="HOGENOM" id="CLU_013386_1_0_5"/>
<dbReference type="UniPathway" id="UPA00664"/>
<dbReference type="Proteomes" id="UP000006375">
    <property type="component" value="Chromosome"/>
</dbReference>
<dbReference type="GO" id="GO:0005886">
    <property type="term" value="C:plasma membrane"/>
    <property type="evidence" value="ECO:0007669"/>
    <property type="project" value="UniProtKB-SubCell"/>
</dbReference>
<dbReference type="GO" id="GO:0008961">
    <property type="term" value="F:phosphatidylglycerol-prolipoprotein diacylglyceryl transferase activity"/>
    <property type="evidence" value="ECO:0007669"/>
    <property type="project" value="UniProtKB-UniRule"/>
</dbReference>
<dbReference type="GO" id="GO:0042158">
    <property type="term" value="P:lipoprotein biosynthetic process"/>
    <property type="evidence" value="ECO:0007669"/>
    <property type="project" value="UniProtKB-UniRule"/>
</dbReference>
<dbReference type="HAMAP" id="MF_01147">
    <property type="entry name" value="Lgt"/>
    <property type="match status" value="1"/>
</dbReference>
<dbReference type="InterPro" id="IPR001640">
    <property type="entry name" value="Lgt"/>
</dbReference>
<dbReference type="NCBIfam" id="TIGR00544">
    <property type="entry name" value="lgt"/>
    <property type="match status" value="1"/>
</dbReference>
<dbReference type="PANTHER" id="PTHR30589:SF0">
    <property type="entry name" value="PHOSPHATIDYLGLYCEROL--PROLIPOPROTEIN DIACYLGLYCERYL TRANSFERASE"/>
    <property type="match status" value="1"/>
</dbReference>
<dbReference type="PANTHER" id="PTHR30589">
    <property type="entry name" value="PROLIPOPROTEIN DIACYLGLYCERYL TRANSFERASE"/>
    <property type="match status" value="1"/>
</dbReference>
<dbReference type="Pfam" id="PF01790">
    <property type="entry name" value="LGT"/>
    <property type="match status" value="1"/>
</dbReference>
<dbReference type="PROSITE" id="PS01311">
    <property type="entry name" value="LGT"/>
    <property type="match status" value="1"/>
</dbReference>
<evidence type="ECO:0000255" key="1">
    <source>
        <dbReference type="HAMAP-Rule" id="MF_01147"/>
    </source>
</evidence>
<reference key="1">
    <citation type="journal article" date="2005" name="Nat. Biotechnol.">
        <title>Complete genome sequence of the acetic acid bacterium Gluconobacter oxydans.</title>
        <authorList>
            <person name="Prust C."/>
            <person name="Hoffmeister M."/>
            <person name="Liesegang H."/>
            <person name="Wiezer A."/>
            <person name="Fricke W.F."/>
            <person name="Ehrenreich A."/>
            <person name="Gottschalk G."/>
            <person name="Deppenmeier U."/>
        </authorList>
    </citation>
    <scope>NUCLEOTIDE SEQUENCE [LARGE SCALE GENOMIC DNA]</scope>
    <source>
        <strain>621H</strain>
    </source>
</reference>
<keyword id="KW-0997">Cell inner membrane</keyword>
<keyword id="KW-1003">Cell membrane</keyword>
<keyword id="KW-0472">Membrane</keyword>
<keyword id="KW-1185">Reference proteome</keyword>
<keyword id="KW-0808">Transferase</keyword>
<keyword id="KW-0812">Transmembrane</keyword>
<keyword id="KW-1133">Transmembrane helix</keyword>